<protein>
    <recommendedName>
        <fullName>Transcriptional regulatory protein RXT3</fullName>
    </recommendedName>
</protein>
<feature type="initiator methionine" description="Removed" evidence="5">
    <location>
        <position position="1"/>
    </location>
</feature>
<feature type="chain" id="PRO_0000234080" description="Transcriptional regulatory protein RXT3">
    <location>
        <begin position="2"/>
        <end position="294"/>
    </location>
</feature>
<feature type="modified residue" description="N-acetylserine" evidence="5">
    <location>
        <position position="2"/>
    </location>
</feature>
<feature type="helix" evidence="7">
    <location>
        <begin position="70"/>
        <end position="79"/>
    </location>
</feature>
<feature type="strand" evidence="7">
    <location>
        <begin position="86"/>
        <end position="91"/>
    </location>
</feature>
<feature type="strand" evidence="7">
    <location>
        <begin position="94"/>
        <end position="96"/>
    </location>
</feature>
<feature type="helix" evidence="7">
    <location>
        <begin position="105"/>
        <end position="107"/>
    </location>
</feature>
<feature type="helix" evidence="7">
    <location>
        <begin position="132"/>
        <end position="134"/>
    </location>
</feature>
<feature type="strand" evidence="7">
    <location>
        <begin position="138"/>
        <end position="143"/>
    </location>
</feature>
<feature type="helix" evidence="7">
    <location>
        <begin position="145"/>
        <end position="152"/>
    </location>
</feature>
<feature type="helix" evidence="7">
    <location>
        <begin position="158"/>
        <end position="161"/>
    </location>
</feature>
<feature type="strand" evidence="7">
    <location>
        <begin position="166"/>
        <end position="172"/>
    </location>
</feature>
<feature type="helix" evidence="7">
    <location>
        <begin position="177"/>
        <end position="183"/>
    </location>
</feature>
<feature type="strand" evidence="6">
    <location>
        <begin position="188"/>
        <end position="190"/>
    </location>
</feature>
<feature type="strand" evidence="7">
    <location>
        <begin position="212"/>
        <end position="214"/>
    </location>
</feature>
<feature type="strand" evidence="7">
    <location>
        <begin position="224"/>
        <end position="233"/>
    </location>
</feature>
<feature type="strand" evidence="6">
    <location>
        <begin position="255"/>
        <end position="257"/>
    </location>
</feature>
<feature type="strand" evidence="7">
    <location>
        <begin position="264"/>
        <end position="274"/>
    </location>
</feature>
<comment type="function">
    <text>Component of the RPD3C(L) histone deacetylase complex (HDAC) responsible for the deacetylation of lysine residues on the N-terminal part of the core histones (H2A, H2B, H3 and H4). Histone deacetylation gives a tag for epigenetic repression and plays an important role in transcriptional regulation, cell cycle progression and developmental events.</text>
</comment>
<comment type="subunit">
    <text evidence="3">Component of the RPD3C(L) complex composed of at least ASH1, CTI6, DEP1, PHO23, RPD3, RXT2, RXT3, SAP30, SDS3, SIN3, UME1 and UME6.</text>
</comment>
<comment type="subcellular location">
    <subcellularLocation>
        <location evidence="1">Nucleus</location>
    </subcellularLocation>
</comment>
<comment type="miscellaneous">
    <text evidence="2">Present with 3060 molecules/cell in log phase SD medium.</text>
</comment>
<comment type="similarity">
    <text evidence="4">Belongs to the RXT3 family.</text>
</comment>
<sequence length="294" mass="33812">MSVSEQDPNRAYRETQSQIYKLQETLLNSARTKNKQEEGQESNTHSFPEQYMHYQNGRNSAYDLPNVSSQSVLAFTEKHYPNKLKNLGTLYYNRFKEGSFDEDSTSYSDRHSFPYNLYDNTLPPPFLPAIGIQNINNIATLKITYEDIQASFNNIESPRKRNNEIWGCDIYSDDSDPILVLRHCGFKIGAPSGGSFHKLRRTPVNVTNQDNVTGNLPLLEGTPFDLEVELLFLPTLQKYPSVKRFDITSREWGSEATVIHDGLSYGIYSIVIKQRLDRDKPHEPNGYIKNLKWT</sequence>
<keyword id="KW-0002">3D-structure</keyword>
<keyword id="KW-0007">Acetylation</keyword>
<keyword id="KW-0156">Chromatin regulator</keyword>
<keyword id="KW-0539">Nucleus</keyword>
<keyword id="KW-1185">Reference proteome</keyword>
<keyword id="KW-0678">Repressor</keyword>
<keyword id="KW-0804">Transcription</keyword>
<keyword id="KW-0805">Transcription regulation</keyword>
<gene>
    <name type="primary">RXT3</name>
    <name type="ordered locus">YDL076C</name>
</gene>
<organism>
    <name type="scientific">Saccharomyces cerevisiae (strain ATCC 204508 / S288c)</name>
    <name type="common">Baker's yeast</name>
    <dbReference type="NCBI Taxonomy" id="559292"/>
    <lineage>
        <taxon>Eukaryota</taxon>
        <taxon>Fungi</taxon>
        <taxon>Dikarya</taxon>
        <taxon>Ascomycota</taxon>
        <taxon>Saccharomycotina</taxon>
        <taxon>Saccharomycetes</taxon>
        <taxon>Saccharomycetales</taxon>
        <taxon>Saccharomycetaceae</taxon>
        <taxon>Saccharomyces</taxon>
    </lineage>
</organism>
<proteinExistence type="evidence at protein level"/>
<accession>Q07458</accession>
<accession>D6VRS3</accession>
<dbReference type="EMBL" id="Z74124">
    <property type="protein sequence ID" value="CAA98642.1"/>
    <property type="molecule type" value="Genomic_DNA"/>
</dbReference>
<dbReference type="EMBL" id="BK006938">
    <property type="protein sequence ID" value="DAA11783.1"/>
    <property type="molecule type" value="Genomic_DNA"/>
</dbReference>
<dbReference type="PIR" id="S67612">
    <property type="entry name" value="S67612"/>
</dbReference>
<dbReference type="RefSeq" id="NP_010207.1">
    <property type="nucleotide sequence ID" value="NM_001180135.1"/>
</dbReference>
<dbReference type="PDB" id="8GA8">
    <property type="method" value="EM"/>
    <property type="resolution" value="3.50 A"/>
    <property type="chains" value="K=1-294"/>
</dbReference>
<dbReference type="PDB" id="8HPO">
    <property type="method" value="EM"/>
    <property type="resolution" value="2.60 A"/>
    <property type="chains" value="J=1-294"/>
</dbReference>
<dbReference type="PDBsum" id="8GA8"/>
<dbReference type="PDBsum" id="8HPO"/>
<dbReference type="EMDB" id="EMD-29892"/>
<dbReference type="EMDB" id="EMD-34935"/>
<dbReference type="SMR" id="Q07458"/>
<dbReference type="BioGRID" id="31985">
    <property type="interactions" value="241"/>
</dbReference>
<dbReference type="ComplexPortal" id="CPX-1852">
    <property type="entry name" value="RPD3L histone deacetylase complex"/>
</dbReference>
<dbReference type="DIP" id="DIP-1797N"/>
<dbReference type="FunCoup" id="Q07458">
    <property type="interactions" value="229"/>
</dbReference>
<dbReference type="IntAct" id="Q07458">
    <property type="interactions" value="26"/>
</dbReference>
<dbReference type="MINT" id="Q07458"/>
<dbReference type="STRING" id="4932.YDL076C"/>
<dbReference type="iPTMnet" id="Q07458"/>
<dbReference type="PaxDb" id="4932-YDL076C"/>
<dbReference type="PeptideAtlas" id="Q07458"/>
<dbReference type="EnsemblFungi" id="YDL076C_mRNA">
    <property type="protein sequence ID" value="YDL076C"/>
    <property type="gene ID" value="YDL076C"/>
</dbReference>
<dbReference type="GeneID" id="851483"/>
<dbReference type="KEGG" id="sce:YDL076C"/>
<dbReference type="AGR" id="SGD:S000002234"/>
<dbReference type="SGD" id="S000002234">
    <property type="gene designation" value="RXT3"/>
</dbReference>
<dbReference type="VEuPathDB" id="FungiDB:YDL076C"/>
<dbReference type="eggNOG" id="KOG4843">
    <property type="taxonomic scope" value="Eukaryota"/>
</dbReference>
<dbReference type="HOGENOM" id="CLU_947333_0_0_1"/>
<dbReference type="InParanoid" id="Q07458"/>
<dbReference type="OMA" id="NNELWGC"/>
<dbReference type="OrthoDB" id="3596986at2759"/>
<dbReference type="BioCyc" id="YEAST:G3O-29487-MONOMER"/>
<dbReference type="BioGRID-ORCS" id="851483">
    <property type="hits" value="0 hits in 10 CRISPR screens"/>
</dbReference>
<dbReference type="PRO" id="PR:Q07458"/>
<dbReference type="Proteomes" id="UP000002311">
    <property type="component" value="Chromosome IV"/>
</dbReference>
<dbReference type="RNAct" id="Q07458">
    <property type="molecule type" value="protein"/>
</dbReference>
<dbReference type="GO" id="GO:0005634">
    <property type="term" value="C:nucleus"/>
    <property type="evidence" value="ECO:0007005"/>
    <property type="project" value="SGD"/>
</dbReference>
<dbReference type="GO" id="GO:0033698">
    <property type="term" value="C:Rpd3L complex"/>
    <property type="evidence" value="ECO:0000314"/>
    <property type="project" value="SGD"/>
</dbReference>
<dbReference type="GO" id="GO:0070210">
    <property type="term" value="C:Rpd3L-Expanded complex"/>
    <property type="evidence" value="ECO:0007005"/>
    <property type="project" value="SGD"/>
</dbReference>
<dbReference type="GO" id="GO:0016479">
    <property type="term" value="P:negative regulation of transcription by RNA polymerase I"/>
    <property type="evidence" value="ECO:0000315"/>
    <property type="project" value="SGD"/>
</dbReference>
<dbReference type="GO" id="GO:0006334">
    <property type="term" value="P:nucleosome assembly"/>
    <property type="evidence" value="ECO:0000303"/>
    <property type="project" value="ComplexPortal"/>
</dbReference>
<dbReference type="GO" id="GO:0006357">
    <property type="term" value="P:regulation of transcription by RNA polymerase II"/>
    <property type="evidence" value="ECO:0000303"/>
    <property type="project" value="ComplexPortal"/>
</dbReference>
<dbReference type="InterPro" id="IPR013951">
    <property type="entry name" value="Rxt3"/>
</dbReference>
<dbReference type="Pfam" id="PF08642">
    <property type="entry name" value="Rxt3"/>
    <property type="match status" value="2"/>
</dbReference>
<evidence type="ECO:0000269" key="1">
    <source>
    </source>
</evidence>
<evidence type="ECO:0000269" key="2">
    <source>
    </source>
</evidence>
<evidence type="ECO:0000269" key="3">
    <source>
    </source>
</evidence>
<evidence type="ECO:0000305" key="4"/>
<evidence type="ECO:0007744" key="5">
    <source>
    </source>
</evidence>
<evidence type="ECO:0007829" key="6">
    <source>
        <dbReference type="PDB" id="8GA8"/>
    </source>
</evidence>
<evidence type="ECO:0007829" key="7">
    <source>
        <dbReference type="PDB" id="8HPO"/>
    </source>
</evidence>
<name>RXT3_YEAST</name>
<reference key="1">
    <citation type="journal article" date="1997" name="Nature">
        <title>The nucleotide sequence of Saccharomyces cerevisiae chromosome IV.</title>
        <authorList>
            <person name="Jacq C."/>
            <person name="Alt-Moerbe J."/>
            <person name="Andre B."/>
            <person name="Arnold W."/>
            <person name="Bahr A."/>
            <person name="Ballesta J.P.G."/>
            <person name="Bargues M."/>
            <person name="Baron L."/>
            <person name="Becker A."/>
            <person name="Biteau N."/>
            <person name="Bloecker H."/>
            <person name="Blugeon C."/>
            <person name="Boskovic J."/>
            <person name="Brandt P."/>
            <person name="Brueckner M."/>
            <person name="Buitrago M.J."/>
            <person name="Coster F."/>
            <person name="Delaveau T."/>
            <person name="del Rey F."/>
            <person name="Dujon B."/>
            <person name="Eide L.G."/>
            <person name="Garcia-Cantalejo J.M."/>
            <person name="Goffeau A."/>
            <person name="Gomez-Peris A."/>
            <person name="Granotier C."/>
            <person name="Hanemann V."/>
            <person name="Hankeln T."/>
            <person name="Hoheisel J.D."/>
            <person name="Jaeger W."/>
            <person name="Jimenez A."/>
            <person name="Jonniaux J.-L."/>
            <person name="Kraemer C."/>
            <person name="Kuester H."/>
            <person name="Laamanen P."/>
            <person name="Legros Y."/>
            <person name="Louis E.J."/>
            <person name="Moeller-Rieker S."/>
            <person name="Monnet A."/>
            <person name="Moro M."/>
            <person name="Mueller-Auer S."/>
            <person name="Nussbaumer B."/>
            <person name="Paricio N."/>
            <person name="Paulin L."/>
            <person name="Perea J."/>
            <person name="Perez-Alonso M."/>
            <person name="Perez-Ortin J.E."/>
            <person name="Pohl T.M."/>
            <person name="Prydz H."/>
            <person name="Purnelle B."/>
            <person name="Rasmussen S.W."/>
            <person name="Remacha M.A."/>
            <person name="Revuelta J.L."/>
            <person name="Rieger M."/>
            <person name="Salom D."/>
            <person name="Saluz H.P."/>
            <person name="Saiz J.E."/>
            <person name="Saren A.-M."/>
            <person name="Schaefer M."/>
            <person name="Scharfe M."/>
            <person name="Schmidt E.R."/>
            <person name="Schneider C."/>
            <person name="Scholler P."/>
            <person name="Schwarz S."/>
            <person name="Soler-Mira A."/>
            <person name="Urrestarazu L.A."/>
            <person name="Verhasselt P."/>
            <person name="Vissers S."/>
            <person name="Voet M."/>
            <person name="Volckaert G."/>
            <person name="Wagner G."/>
            <person name="Wambutt R."/>
            <person name="Wedler E."/>
            <person name="Wedler H."/>
            <person name="Woelfl S."/>
            <person name="Harris D.E."/>
            <person name="Bowman S."/>
            <person name="Brown D."/>
            <person name="Churcher C.M."/>
            <person name="Connor R."/>
            <person name="Dedman K."/>
            <person name="Gentles S."/>
            <person name="Hamlin N."/>
            <person name="Hunt S."/>
            <person name="Jones L."/>
            <person name="McDonald S."/>
            <person name="Murphy L.D."/>
            <person name="Niblett D."/>
            <person name="Odell C."/>
            <person name="Oliver K."/>
            <person name="Rajandream M.A."/>
            <person name="Richards C."/>
            <person name="Shore L."/>
            <person name="Walsh S.V."/>
            <person name="Barrell B.G."/>
            <person name="Dietrich F.S."/>
            <person name="Mulligan J.T."/>
            <person name="Allen E."/>
            <person name="Araujo R."/>
            <person name="Aviles E."/>
            <person name="Berno A."/>
            <person name="Carpenter J."/>
            <person name="Chen E."/>
            <person name="Cherry J.M."/>
            <person name="Chung E."/>
            <person name="Duncan M."/>
            <person name="Hunicke-Smith S."/>
            <person name="Hyman R.W."/>
            <person name="Komp C."/>
            <person name="Lashkari D."/>
            <person name="Lew H."/>
            <person name="Lin D."/>
            <person name="Mosedale D."/>
            <person name="Nakahara K."/>
            <person name="Namath A."/>
            <person name="Oefner P."/>
            <person name="Oh C."/>
            <person name="Petel F.X."/>
            <person name="Roberts D."/>
            <person name="Schramm S."/>
            <person name="Schroeder M."/>
            <person name="Shogren T."/>
            <person name="Shroff N."/>
            <person name="Winant A."/>
            <person name="Yelton M.A."/>
            <person name="Botstein D."/>
            <person name="Davis R.W."/>
            <person name="Johnston M."/>
            <person name="Andrews S."/>
            <person name="Brinkman R."/>
            <person name="Cooper J."/>
            <person name="Ding H."/>
            <person name="Du Z."/>
            <person name="Favello A."/>
            <person name="Fulton L."/>
            <person name="Gattung S."/>
            <person name="Greco T."/>
            <person name="Hallsworth K."/>
            <person name="Hawkins J."/>
            <person name="Hillier L.W."/>
            <person name="Jier M."/>
            <person name="Johnson D."/>
            <person name="Johnston L."/>
            <person name="Kirsten J."/>
            <person name="Kucaba T."/>
            <person name="Langston Y."/>
            <person name="Latreille P."/>
            <person name="Le T."/>
            <person name="Mardis E."/>
            <person name="Menezes S."/>
            <person name="Miller N."/>
            <person name="Nhan M."/>
            <person name="Pauley A."/>
            <person name="Peluso D."/>
            <person name="Rifkin L."/>
            <person name="Riles L."/>
            <person name="Taich A."/>
            <person name="Trevaskis E."/>
            <person name="Vignati D."/>
            <person name="Wilcox L."/>
            <person name="Wohldman P."/>
            <person name="Vaudin M."/>
            <person name="Wilson R."/>
            <person name="Waterston R."/>
            <person name="Albermann K."/>
            <person name="Hani J."/>
            <person name="Heumann K."/>
            <person name="Kleine K."/>
            <person name="Mewes H.-W."/>
            <person name="Zollner A."/>
            <person name="Zaccaria P."/>
        </authorList>
    </citation>
    <scope>NUCLEOTIDE SEQUENCE [LARGE SCALE GENOMIC DNA]</scope>
    <source>
        <strain>ATCC 204508 / S288c</strain>
    </source>
</reference>
<reference key="2">
    <citation type="journal article" date="2014" name="G3 (Bethesda)">
        <title>The reference genome sequence of Saccharomyces cerevisiae: Then and now.</title>
        <authorList>
            <person name="Engel S.R."/>
            <person name="Dietrich F.S."/>
            <person name="Fisk D.G."/>
            <person name="Binkley G."/>
            <person name="Balakrishnan R."/>
            <person name="Costanzo M.C."/>
            <person name="Dwight S.S."/>
            <person name="Hitz B.C."/>
            <person name="Karra K."/>
            <person name="Nash R.S."/>
            <person name="Weng S."/>
            <person name="Wong E.D."/>
            <person name="Lloyd P."/>
            <person name="Skrzypek M.S."/>
            <person name="Miyasato S.R."/>
            <person name="Simison M."/>
            <person name="Cherry J.M."/>
        </authorList>
    </citation>
    <scope>GENOME REANNOTATION</scope>
    <source>
        <strain>ATCC 204508 / S288c</strain>
    </source>
</reference>
<reference key="3">
    <citation type="journal article" date="2003" name="Nature">
        <title>Global analysis of protein localization in budding yeast.</title>
        <authorList>
            <person name="Huh W.-K."/>
            <person name="Falvo J.V."/>
            <person name="Gerke L.C."/>
            <person name="Carroll A.S."/>
            <person name="Howson R.W."/>
            <person name="Weissman J.S."/>
            <person name="O'Shea E.K."/>
        </authorList>
    </citation>
    <scope>SUBCELLULAR LOCATION [LARGE SCALE ANALYSIS]</scope>
</reference>
<reference key="4">
    <citation type="journal article" date="2003" name="Nature">
        <title>Global analysis of protein expression in yeast.</title>
        <authorList>
            <person name="Ghaemmaghami S."/>
            <person name="Huh W.-K."/>
            <person name="Bower K."/>
            <person name="Howson R.W."/>
            <person name="Belle A."/>
            <person name="Dephoure N."/>
            <person name="O'Shea E.K."/>
            <person name="Weissman J.S."/>
        </authorList>
    </citation>
    <scope>LEVEL OF PROTEIN EXPRESSION [LARGE SCALE ANALYSIS]</scope>
</reference>
<reference key="5">
    <citation type="journal article" date="2005" name="Biochim. Biophys. Acta">
        <title>Stable incorporation of sequence specific repressors Ash1 and Ume6 into the Rpd3L complex.</title>
        <authorList>
            <person name="Carrozza M.J."/>
            <person name="Florens L."/>
            <person name="Swanson S.K."/>
            <person name="Shia W.-J."/>
            <person name="Anderson S."/>
            <person name="Yates J."/>
            <person name="Washburn M.P."/>
            <person name="Workman J.L."/>
        </authorList>
    </citation>
    <scope>IDENTIFICATION IN THE RPD3C(L) COMPLEX</scope>
    <scope>IDENTIFICATION BY MASS SPECTROMETRY</scope>
</reference>
<reference key="6">
    <citation type="journal article" date="2012" name="Proc. Natl. Acad. Sci. U.S.A.">
        <title>N-terminal acetylome analyses and functional insights of the N-terminal acetyltransferase NatB.</title>
        <authorList>
            <person name="Van Damme P."/>
            <person name="Lasa M."/>
            <person name="Polevoda B."/>
            <person name="Gazquez C."/>
            <person name="Elosegui-Artola A."/>
            <person name="Kim D.S."/>
            <person name="De Juan-Pardo E."/>
            <person name="Demeyer K."/>
            <person name="Hole K."/>
            <person name="Larrea E."/>
            <person name="Timmerman E."/>
            <person name="Prieto J."/>
            <person name="Arnesen T."/>
            <person name="Sherman F."/>
            <person name="Gevaert K."/>
            <person name="Aldabe R."/>
        </authorList>
    </citation>
    <scope>ACETYLATION [LARGE SCALE ANALYSIS] AT SER-2</scope>
    <scope>CLEAVAGE OF INITIATOR METHIONINE [LARGE SCALE ANALYSIS]</scope>
    <scope>IDENTIFICATION BY MASS SPECTROMETRY [LARGE SCALE ANALYSIS]</scope>
</reference>